<dbReference type="EMBL" id="BA000021">
    <property type="protein sequence ID" value="BAC24712.1"/>
    <property type="molecule type" value="Genomic_DNA"/>
</dbReference>
<dbReference type="SMR" id="P59380"/>
<dbReference type="STRING" id="36870.gene:10369075"/>
<dbReference type="KEGG" id="wbr:rpsK"/>
<dbReference type="eggNOG" id="COG0100">
    <property type="taxonomic scope" value="Bacteria"/>
</dbReference>
<dbReference type="HOGENOM" id="CLU_072439_5_0_6"/>
<dbReference type="OrthoDB" id="9806415at2"/>
<dbReference type="Proteomes" id="UP000000562">
    <property type="component" value="Chromosome"/>
</dbReference>
<dbReference type="GO" id="GO:1990904">
    <property type="term" value="C:ribonucleoprotein complex"/>
    <property type="evidence" value="ECO:0007669"/>
    <property type="project" value="UniProtKB-KW"/>
</dbReference>
<dbReference type="GO" id="GO:0005840">
    <property type="term" value="C:ribosome"/>
    <property type="evidence" value="ECO:0007669"/>
    <property type="project" value="UniProtKB-KW"/>
</dbReference>
<dbReference type="GO" id="GO:0019843">
    <property type="term" value="F:rRNA binding"/>
    <property type="evidence" value="ECO:0007669"/>
    <property type="project" value="UniProtKB-UniRule"/>
</dbReference>
<dbReference type="GO" id="GO:0003735">
    <property type="term" value="F:structural constituent of ribosome"/>
    <property type="evidence" value="ECO:0007669"/>
    <property type="project" value="InterPro"/>
</dbReference>
<dbReference type="GO" id="GO:0006412">
    <property type="term" value="P:translation"/>
    <property type="evidence" value="ECO:0007669"/>
    <property type="project" value="UniProtKB-UniRule"/>
</dbReference>
<dbReference type="FunFam" id="3.30.420.80:FF:000001">
    <property type="entry name" value="30S ribosomal protein S11"/>
    <property type="match status" value="1"/>
</dbReference>
<dbReference type="Gene3D" id="3.30.420.80">
    <property type="entry name" value="Ribosomal protein S11"/>
    <property type="match status" value="1"/>
</dbReference>
<dbReference type="HAMAP" id="MF_01310">
    <property type="entry name" value="Ribosomal_uS11"/>
    <property type="match status" value="1"/>
</dbReference>
<dbReference type="InterPro" id="IPR001971">
    <property type="entry name" value="Ribosomal_uS11"/>
</dbReference>
<dbReference type="InterPro" id="IPR019981">
    <property type="entry name" value="Ribosomal_uS11_bac-type"/>
</dbReference>
<dbReference type="InterPro" id="IPR018102">
    <property type="entry name" value="Ribosomal_uS11_CS"/>
</dbReference>
<dbReference type="InterPro" id="IPR036967">
    <property type="entry name" value="Ribosomal_uS11_sf"/>
</dbReference>
<dbReference type="NCBIfam" id="NF003698">
    <property type="entry name" value="PRK05309.1"/>
    <property type="match status" value="1"/>
</dbReference>
<dbReference type="NCBIfam" id="TIGR03632">
    <property type="entry name" value="uS11_bact"/>
    <property type="match status" value="1"/>
</dbReference>
<dbReference type="PANTHER" id="PTHR11759">
    <property type="entry name" value="40S RIBOSOMAL PROTEIN S14/30S RIBOSOMAL PROTEIN S11"/>
    <property type="match status" value="1"/>
</dbReference>
<dbReference type="Pfam" id="PF00411">
    <property type="entry name" value="Ribosomal_S11"/>
    <property type="match status" value="1"/>
</dbReference>
<dbReference type="PIRSF" id="PIRSF002131">
    <property type="entry name" value="Ribosomal_S11"/>
    <property type="match status" value="1"/>
</dbReference>
<dbReference type="SUPFAM" id="SSF53137">
    <property type="entry name" value="Translational machinery components"/>
    <property type="match status" value="1"/>
</dbReference>
<dbReference type="PROSITE" id="PS00054">
    <property type="entry name" value="RIBOSOMAL_S11"/>
    <property type="match status" value="1"/>
</dbReference>
<comment type="function">
    <text evidence="1">Located on the platform of the 30S subunit, it bridges several disparate RNA helices of the 16S rRNA. Forms part of the Shine-Dalgarno cleft in the 70S ribosome.</text>
</comment>
<comment type="subunit">
    <text evidence="1">Part of the 30S ribosomal subunit. Interacts with proteins S7 and S18. Binds to IF-3.</text>
</comment>
<comment type="similarity">
    <text evidence="1">Belongs to the universal ribosomal protein uS11 family.</text>
</comment>
<protein>
    <recommendedName>
        <fullName evidence="1">Small ribosomal subunit protein uS11</fullName>
    </recommendedName>
    <alternativeName>
        <fullName evidence="2">30S ribosomal protein S11</fullName>
    </alternativeName>
</protein>
<evidence type="ECO:0000255" key="1">
    <source>
        <dbReference type="HAMAP-Rule" id="MF_01310"/>
    </source>
</evidence>
<evidence type="ECO:0000305" key="2"/>
<accession>P59380</accession>
<keyword id="KW-1185">Reference proteome</keyword>
<keyword id="KW-0687">Ribonucleoprotein</keyword>
<keyword id="KW-0689">Ribosomal protein</keyword>
<keyword id="KW-0694">RNA-binding</keyword>
<keyword id="KW-0699">rRNA-binding</keyword>
<gene>
    <name evidence="1" type="primary">rpsK</name>
    <name type="ordered locus">WIGBR5660</name>
</gene>
<name>RS11_WIGBR</name>
<reference key="1">
    <citation type="journal article" date="2002" name="Nat. Genet.">
        <title>Genome sequence of the endocellular obligate symbiont of tsetse flies, Wigglesworthia glossinidia.</title>
        <authorList>
            <person name="Akman L."/>
            <person name="Yamashita A."/>
            <person name="Watanabe H."/>
            <person name="Oshima K."/>
            <person name="Shiba T."/>
            <person name="Hattori M."/>
            <person name="Aksoy S."/>
        </authorList>
    </citation>
    <scope>NUCLEOTIDE SEQUENCE [LARGE SCALE GENOMIC DNA]</scope>
</reference>
<feature type="chain" id="PRO_0000123257" description="Small ribosomal subunit protein uS11">
    <location>
        <begin position="1"/>
        <end position="131"/>
    </location>
</feature>
<proteinExistence type="inferred from homology"/>
<organism>
    <name type="scientific">Wigglesworthia glossinidia brevipalpis</name>
    <dbReference type="NCBI Taxonomy" id="36870"/>
    <lineage>
        <taxon>Bacteria</taxon>
        <taxon>Pseudomonadati</taxon>
        <taxon>Pseudomonadota</taxon>
        <taxon>Gammaproteobacteria</taxon>
        <taxon>Enterobacterales</taxon>
        <taxon>Erwiniaceae</taxon>
        <taxon>Wigglesworthia</taxon>
    </lineage>
</organism>
<sequence>MSKKQNSSISRKKIKRQILEGIAHIHASFNNTIVTITDRQGNTLGWATSGGSGFRGSRKSTPFAAQVAAEKCSEIAKEYGIKNLEIMVKGPGPGRESTIRALNSSGFKITNITDVTPIPHNGCRPPKRRRV</sequence>